<comment type="function">
    <text evidence="1">Catalyzes the formation of S-adenosylmethionine from methionine and ATP.</text>
</comment>
<comment type="catalytic activity">
    <reaction>
        <text>L-methionine + ATP + H2O = S-adenosyl-L-methionine + phosphate + diphosphate</text>
        <dbReference type="Rhea" id="RHEA:21080"/>
        <dbReference type="ChEBI" id="CHEBI:15377"/>
        <dbReference type="ChEBI" id="CHEBI:30616"/>
        <dbReference type="ChEBI" id="CHEBI:33019"/>
        <dbReference type="ChEBI" id="CHEBI:43474"/>
        <dbReference type="ChEBI" id="CHEBI:57844"/>
        <dbReference type="ChEBI" id="CHEBI:59789"/>
        <dbReference type="EC" id="2.5.1.6"/>
    </reaction>
</comment>
<comment type="cofactor">
    <cofactor evidence="1">
        <name>Mg(2+)</name>
        <dbReference type="ChEBI" id="CHEBI:18420"/>
    </cofactor>
</comment>
<comment type="pathway">
    <text>Amino-acid biosynthesis; S-adenosyl-L-methionine biosynthesis; S-adenosyl-L-methionine from L-methionine: step 1/1.</text>
</comment>
<comment type="similarity">
    <text evidence="3">Belongs to the AdoMet synthase 2 family.</text>
</comment>
<comment type="sequence caution" evidence="3">
    <conflict type="erroneous initiation">
        <sequence resource="EMBL-CDS" id="CAB49302"/>
    </conflict>
    <text>Extended N-terminus.</text>
</comment>
<comment type="sequence caution" evidence="3">
    <conflict type="erroneous initiation">
        <sequence resource="EMBL-CDS" id="CCE69757"/>
    </conflict>
    <text>Extended N-terminus.</text>
</comment>
<accession>Q9V1P7</accession>
<accession>G8ZI14</accession>
<reference key="1">
    <citation type="journal article" date="2003" name="Mol. Microbiol.">
        <title>An integrated analysis of the genome of the hyperthermophilic archaeon Pyrococcus abyssi.</title>
        <authorList>
            <person name="Cohen G.N."/>
            <person name="Barbe V."/>
            <person name="Flament D."/>
            <person name="Galperin M."/>
            <person name="Heilig R."/>
            <person name="Lecompte O."/>
            <person name="Poch O."/>
            <person name="Prieur D."/>
            <person name="Querellou J."/>
            <person name="Ripp R."/>
            <person name="Thierry J.-C."/>
            <person name="Van der Oost J."/>
            <person name="Weissenbach J."/>
            <person name="Zivanovic Y."/>
            <person name="Forterre P."/>
        </authorList>
    </citation>
    <scope>NUCLEOTIDE SEQUENCE [LARGE SCALE GENOMIC DNA]</scope>
    <source>
        <strain>GE5 / Orsay</strain>
    </source>
</reference>
<reference key="2">
    <citation type="journal article" date="2012" name="Curr. Microbiol.">
        <title>Re-annotation of two hyperthermophilic archaea Pyrococcus abyssi GE5 and Pyrococcus furiosus DSM 3638.</title>
        <authorList>
            <person name="Gao J."/>
            <person name="Wang J."/>
        </authorList>
    </citation>
    <scope>GENOME REANNOTATION</scope>
    <source>
        <strain>GE5 / Orsay</strain>
    </source>
</reference>
<feature type="chain" id="PRO_0000150035" description="S-adenosylmethionine synthase">
    <location>
        <begin position="1"/>
        <end position="401"/>
    </location>
</feature>
<feature type="binding site" evidence="2">
    <location>
        <begin position="136"/>
        <end position="141"/>
    </location>
    <ligand>
        <name>ATP</name>
        <dbReference type="ChEBI" id="CHEBI:30616"/>
    </ligand>
</feature>
<keyword id="KW-0067">ATP-binding</keyword>
<keyword id="KW-0460">Magnesium</keyword>
<keyword id="KW-0547">Nucleotide-binding</keyword>
<keyword id="KW-0554">One-carbon metabolism</keyword>
<keyword id="KW-0808">Transferase</keyword>
<organism>
    <name type="scientific">Pyrococcus abyssi (strain GE5 / Orsay)</name>
    <dbReference type="NCBI Taxonomy" id="272844"/>
    <lineage>
        <taxon>Archaea</taxon>
        <taxon>Methanobacteriati</taxon>
        <taxon>Methanobacteriota</taxon>
        <taxon>Thermococci</taxon>
        <taxon>Thermococcales</taxon>
        <taxon>Thermococcaceae</taxon>
        <taxon>Pyrococcus</taxon>
    </lineage>
</organism>
<evidence type="ECO:0000250" key="1"/>
<evidence type="ECO:0000255" key="2"/>
<evidence type="ECO:0000305" key="3"/>
<dbReference type="EC" id="2.5.1.6"/>
<dbReference type="EMBL" id="AJ248284">
    <property type="protein sequence ID" value="CAB49302.1"/>
    <property type="status" value="ALT_INIT"/>
    <property type="molecule type" value="Genomic_DNA"/>
</dbReference>
<dbReference type="EMBL" id="HE613800">
    <property type="protein sequence ID" value="CCE69757.1"/>
    <property type="status" value="ALT_INIT"/>
    <property type="molecule type" value="Genomic_DNA"/>
</dbReference>
<dbReference type="PIR" id="G75152">
    <property type="entry name" value="G75152"/>
</dbReference>
<dbReference type="RefSeq" id="WP_048146541.1">
    <property type="nucleotide sequence ID" value="NC_000868.1"/>
</dbReference>
<dbReference type="SMR" id="Q9V1P7"/>
<dbReference type="STRING" id="272844.PAB2094"/>
<dbReference type="KEGG" id="pab:PAB2094"/>
<dbReference type="PATRIC" id="fig|272844.11.peg.400"/>
<dbReference type="eggNOG" id="arCOG01678">
    <property type="taxonomic scope" value="Archaea"/>
</dbReference>
<dbReference type="HOGENOM" id="CLU_057642_0_0_2"/>
<dbReference type="OrthoDB" id="204488at2157"/>
<dbReference type="PhylomeDB" id="Q9V1P7"/>
<dbReference type="UniPathway" id="UPA00315">
    <property type="reaction ID" value="UER00080"/>
</dbReference>
<dbReference type="Proteomes" id="UP000000810">
    <property type="component" value="Chromosome"/>
</dbReference>
<dbReference type="Proteomes" id="UP000009139">
    <property type="component" value="Chromosome"/>
</dbReference>
<dbReference type="GO" id="GO:0005524">
    <property type="term" value="F:ATP binding"/>
    <property type="evidence" value="ECO:0007669"/>
    <property type="project" value="UniProtKB-UniRule"/>
</dbReference>
<dbReference type="GO" id="GO:0000287">
    <property type="term" value="F:magnesium ion binding"/>
    <property type="evidence" value="ECO:0007669"/>
    <property type="project" value="UniProtKB-UniRule"/>
</dbReference>
<dbReference type="GO" id="GO:0004478">
    <property type="term" value="F:methionine adenosyltransferase activity"/>
    <property type="evidence" value="ECO:0007669"/>
    <property type="project" value="UniProtKB-UniRule"/>
</dbReference>
<dbReference type="GO" id="GO:0006730">
    <property type="term" value="P:one-carbon metabolic process"/>
    <property type="evidence" value="ECO:0007669"/>
    <property type="project" value="UniProtKB-KW"/>
</dbReference>
<dbReference type="GO" id="GO:0006556">
    <property type="term" value="P:S-adenosylmethionine biosynthetic process"/>
    <property type="evidence" value="ECO:0007669"/>
    <property type="project" value="UniProtKB-UniRule"/>
</dbReference>
<dbReference type="Gene3D" id="3.30.300.10">
    <property type="match status" value="1"/>
</dbReference>
<dbReference type="Gene3D" id="3.30.300.280">
    <property type="entry name" value="S-adenosylmethionine synthetase, C-terminal domain"/>
    <property type="match status" value="2"/>
</dbReference>
<dbReference type="HAMAP" id="MF_00136">
    <property type="entry name" value="S_AdoMet_synth2"/>
    <property type="match status" value="1"/>
</dbReference>
<dbReference type="InterPro" id="IPR027790">
    <property type="entry name" value="AdoMet_synthase_2_family"/>
</dbReference>
<dbReference type="InterPro" id="IPR042544">
    <property type="entry name" value="AdoMet_synthase_3"/>
</dbReference>
<dbReference type="InterPro" id="IPR002795">
    <property type="entry name" value="S-AdoMet_synthetase_arc"/>
</dbReference>
<dbReference type="NCBIfam" id="NF003364">
    <property type="entry name" value="PRK04439.1-3"/>
    <property type="match status" value="1"/>
</dbReference>
<dbReference type="NCBIfam" id="NF003366">
    <property type="entry name" value="PRK04439.1-5"/>
    <property type="match status" value="1"/>
</dbReference>
<dbReference type="PANTHER" id="PTHR36697">
    <property type="entry name" value="S-ADENOSYLMETHIONINE SYNTHASE"/>
    <property type="match status" value="1"/>
</dbReference>
<dbReference type="PANTHER" id="PTHR36697:SF1">
    <property type="entry name" value="S-ADENOSYLMETHIONINE SYNTHASE"/>
    <property type="match status" value="1"/>
</dbReference>
<dbReference type="Pfam" id="PF01941">
    <property type="entry name" value="AdoMet_Synthase"/>
    <property type="match status" value="1"/>
</dbReference>
<name>METK_PYRAB</name>
<protein>
    <recommendedName>
        <fullName>S-adenosylmethionine synthase</fullName>
        <shortName>AdoMet synthase</shortName>
        <ecNumber>2.5.1.6</ecNumber>
    </recommendedName>
    <alternativeName>
        <fullName>Methionine adenosyltransferase</fullName>
    </alternativeName>
</protein>
<proteinExistence type="inferred from homology"/>
<sequence length="401" mass="44189">MARNIVVEEIVRTPVEKQKVELVERKGIGHPDSIADGIAESISRALSREYMKRYGVILHHNTDQVEVVGGRAYPRFGGGEVVKPIYILLSGRAVELVDQELFPVHEVAIKAAKEYLKKNIRHLDVENHVVIDSRIGQGSVDLVSVFNKAKENPIPLANDTSFGVGFAPLTETERLVYETERLLNGEKFKKELPAVGEDIKVMGLRRGDEIDLTIAAAIVDSEVSGPKEYLEVKEKIAEAVEELAKDITSRKVNIYVNTADDPDSGIFYITVTGTSAEAGDDGSVGRGNRVNGLITPNRHMSMEAAAGKNPVSHVGKIYNILAMFIANDIAKTLPVEEVYVRILSQIGKPIDQPLVASIQVIPKQGHSVKEFEKDAYSIADEWLANITKIQKMILEDKISVF</sequence>
<gene>
    <name type="primary">mat</name>
    <name type="ordered locus">PYRAB03800</name>
    <name type="ORF">PAB2094</name>
</gene>